<protein>
    <recommendedName>
        <fullName>Cytochrome c oxidase subunit 3</fullName>
        <ecNumber>7.1.1.9</ecNumber>
    </recommendedName>
    <alternativeName>
        <fullName>Cytochrome c oxidase polypeptide III</fullName>
    </alternativeName>
</protein>
<gene>
    <name type="primary">mt-co3</name>
    <name type="synonym">coiii</name>
    <name type="synonym">coxiii</name>
    <name type="synonym">mtco3</name>
</gene>
<sequence>MAHQAHAYHMVDPSPWPLTGAIAALLLTSGTAVWFHFHSLTLLTMGNILLLLTMYQWWRDIIREGTFQGHHTPPVQKGLRYGMILFITSEVFFFLGFFWAFYHSSLSPTPELGGCWPPTGIITLDPFEVPLLNTAVLLASGVTVTWAHHSIMEGERKQTIQALTLTILLGFYFTFLQGMEYYEAPFTIADGVYGSTFFVATGFHGLHVIIGSTFLAICLLRQIQYHFTSEHHFGFEAAAWYWHFVDVVWLFLYVSIYWWGS</sequence>
<reference key="1">
    <citation type="journal article" date="1994" name="Mol. Mar. Biol. Biotechnol.">
        <title>Cloning and sequencing of the Atlantic salmon (Salmo salar) cytochrome c oxidase subunit III gene (coxIII) and analysis of coxIII expression during parr-smolt transformation.</title>
        <authorList>
            <person name="Hardiman G."/>
            <person name="Byrnes L."/>
            <person name="Peden J."/>
            <person name="Wolff J."/>
            <person name="Gannon F."/>
        </authorList>
    </citation>
    <scope>NUCLEOTIDE SEQUENCE [GENOMIC DNA]</scope>
    <source>
        <tissue>Liver</tissue>
    </source>
</reference>
<reference key="2">
    <citation type="journal article" date="1994" name="J. Appl. Ichthyol.">
        <title>Isolation of Atlantic Salmon (Salmo salar) cytochrome c oxidase subunit II gene (coxII).</title>
        <authorList>
            <person name="Hardiman G.T."/>
            <person name="Wolff J."/>
            <person name="Peden J."/>
            <person name="Gannon F."/>
        </authorList>
    </citation>
    <scope>NUCLEOTIDE SEQUENCE [GENOMIC DNA]</scope>
    <source>
        <tissue>Kidney</tissue>
    </source>
</reference>
<reference key="3">
    <citation type="journal article" date="1997" name="Mol. Phylogenet. Evol.">
        <title>Mitochondrial DNA sequence analysis of the masu salmon -- phylogeny in the genus Oncorhynchus.</title>
        <authorList>
            <person name="Oohara I."/>
            <person name="Sawano K."/>
            <person name="Okazaki T."/>
        </authorList>
    </citation>
    <scope>NUCLEOTIDE SEQUENCE [GENOMIC DNA]</scope>
</reference>
<reference key="4">
    <citation type="journal article" date="1999" name="Gene">
        <title>The complete mitochondrial DNA sequence of the Atlantic salmon, Salmo salar.</title>
        <authorList>
            <person name="Hurst C.D."/>
            <person name="Bartlett S.E."/>
            <person name="Davidson W.S."/>
            <person name="Bruce I.J."/>
        </authorList>
    </citation>
    <scope>NUCLEOTIDE SEQUENCE [GENOMIC DNA]</scope>
    <source>
        <tissue>Liver</tissue>
    </source>
</reference>
<reference key="5">
    <citation type="submission" date="1999-03" db="EMBL/GenBank/DDBJ databases">
        <title>The complete mitochondrial genome sequence of a teleost, Salmo salar, and comparisons with other salmoniformes.</title>
        <authorList>
            <person name="Arnason U."/>
            <person name="Johnsson E."/>
            <person name="Rasmussen A.S."/>
        </authorList>
    </citation>
    <scope>NUCLEOTIDE SEQUENCE [GENOMIC DNA]</scope>
</reference>
<reference key="6">
    <citation type="journal article" date="1989" name="Genome">
        <title>Organisation of the mitochondrial genome from Atlantic salmon (Salmo salar).</title>
        <authorList>
            <person name="Davidson W.S."/>
            <person name="Birt T.P."/>
            <person name="Green J.M."/>
        </authorList>
    </citation>
    <scope>NUCLEOTIDE SEQUENCE [GENOMIC DNA]</scope>
</reference>
<name>COX3_SALSA</name>
<organism>
    <name type="scientific">Salmo salar</name>
    <name type="common">Atlantic salmon</name>
    <dbReference type="NCBI Taxonomy" id="8030"/>
    <lineage>
        <taxon>Eukaryota</taxon>
        <taxon>Metazoa</taxon>
        <taxon>Chordata</taxon>
        <taxon>Craniata</taxon>
        <taxon>Vertebrata</taxon>
        <taxon>Euteleostomi</taxon>
        <taxon>Actinopterygii</taxon>
        <taxon>Neopterygii</taxon>
        <taxon>Teleostei</taxon>
        <taxon>Protacanthopterygii</taxon>
        <taxon>Salmoniformes</taxon>
        <taxon>Salmonidae</taxon>
        <taxon>Salmoninae</taxon>
        <taxon>Salmo</taxon>
    </lineage>
</organism>
<feature type="chain" id="PRO_0000183849" description="Cytochrome c oxidase subunit 3">
    <location>
        <begin position="1"/>
        <end position="261"/>
    </location>
</feature>
<feature type="topological domain" description="Mitochondrial matrix" evidence="1">
    <location>
        <begin position="1"/>
        <end position="15"/>
    </location>
</feature>
<feature type="transmembrane region" description="Helical; Name=I" evidence="1">
    <location>
        <begin position="16"/>
        <end position="34"/>
    </location>
</feature>
<feature type="topological domain" description="Mitochondrial intermembrane" evidence="1">
    <location>
        <begin position="35"/>
        <end position="40"/>
    </location>
</feature>
<feature type="transmembrane region" description="Helical; Name=II" evidence="1">
    <location>
        <begin position="41"/>
        <end position="66"/>
    </location>
</feature>
<feature type="topological domain" description="Mitochondrial matrix" evidence="1">
    <location>
        <begin position="67"/>
        <end position="72"/>
    </location>
</feature>
<feature type="transmembrane region" description="Helical; Name=III" evidence="1">
    <location>
        <begin position="73"/>
        <end position="105"/>
    </location>
</feature>
<feature type="topological domain" description="Mitochondrial intermembrane" evidence="1">
    <location>
        <begin position="106"/>
        <end position="128"/>
    </location>
</feature>
<feature type="transmembrane region" description="Helical; Name=IV" evidence="1">
    <location>
        <begin position="129"/>
        <end position="152"/>
    </location>
</feature>
<feature type="topological domain" description="Mitochondrial matrix" evidence="1">
    <location>
        <begin position="153"/>
        <end position="155"/>
    </location>
</feature>
<feature type="transmembrane region" description="Helical; Name=V" evidence="1">
    <location>
        <begin position="156"/>
        <end position="183"/>
    </location>
</feature>
<feature type="topological domain" description="Mitochondrial intermembrane" evidence="1">
    <location>
        <begin position="184"/>
        <end position="190"/>
    </location>
</feature>
<feature type="transmembrane region" description="Helical; Name=VI" evidence="1">
    <location>
        <begin position="191"/>
        <end position="223"/>
    </location>
</feature>
<feature type="topological domain" description="Mitochondrial matrix" evidence="1">
    <location>
        <begin position="224"/>
        <end position="232"/>
    </location>
</feature>
<feature type="transmembrane region" description="Helical; Name=VII" evidence="1">
    <location>
        <begin position="233"/>
        <end position="256"/>
    </location>
</feature>
<feature type="topological domain" description="Mitochondrial intermembrane" evidence="1">
    <location>
        <begin position="257"/>
        <end position="261"/>
    </location>
</feature>
<feature type="sequence conflict" description="In Ref. 1 and 2." evidence="3" ref="1 2">
    <original>A</original>
    <variation>S</variation>
    <location>
        <position position="135"/>
    </location>
</feature>
<feature type="sequence conflict" description="In Ref. 6." evidence="3" ref="6">
    <original>S</original>
    <variation>L</variation>
    <location>
        <position position="140"/>
    </location>
</feature>
<feature type="sequence conflict" description="In Ref. 1 and 2." evidence="3" ref="1 2">
    <original>Q</original>
    <variation>R</variation>
    <location>
        <position position="158"/>
    </location>
</feature>
<feature type="sequence conflict" description="In Ref. 6." evidence="3" ref="6">
    <original>T</original>
    <variation>M</variation>
    <location>
        <position position="159"/>
    </location>
</feature>
<feature type="sequence conflict" description="In Ref. 6." evidence="3" ref="6">
    <original>T</original>
    <variation>L</variation>
    <location>
        <position position="164"/>
    </location>
</feature>
<feature type="sequence conflict" description="In Ref. 6." evidence="3" ref="6">
    <original>EA</original>
    <variation>QS</variation>
    <location>
        <begin position="183"/>
        <end position="184"/>
    </location>
</feature>
<feature type="sequence conflict" description="In Ref. 6." evidence="3" ref="6">
    <original>VY</original>
    <variation>YT</variation>
    <location>
        <begin position="192"/>
        <end position="193"/>
    </location>
</feature>
<feature type="sequence conflict" description="In Ref. 6." evidence="3" ref="6">
    <original>A</original>
    <variation>T</variation>
    <location>
        <position position="216"/>
    </location>
</feature>
<feature type="sequence conflict" description="In Ref. 6." evidence="3" ref="6">
    <original>QIQY</original>
    <variation>NSMF</variation>
    <location>
        <begin position="222"/>
        <end position="225"/>
    </location>
</feature>
<feature type="sequence conflict" description="In Ref. 6." evidence="3" ref="6">
    <original>E</original>
    <variation>K</variation>
    <location>
        <position position="230"/>
    </location>
</feature>
<feature type="sequence conflict" description="In Ref. 1 and 2." evidence="3" ref="1 2">
    <original>A</original>
    <variation>L</variation>
    <location>
        <position position="237"/>
    </location>
</feature>
<dbReference type="EC" id="7.1.1.9"/>
<dbReference type="EMBL" id="L04502">
    <property type="protein sequence ID" value="AAA62409.1"/>
    <property type="molecule type" value="Genomic_DNA"/>
</dbReference>
<dbReference type="EMBL" id="D84148">
    <property type="protein sequence ID" value="BAA20158.1"/>
    <property type="molecule type" value="Genomic_DNA"/>
</dbReference>
<dbReference type="EMBL" id="U12143">
    <property type="protein sequence ID" value="AAD04739.1"/>
    <property type="molecule type" value="Genomic_DNA"/>
</dbReference>
<dbReference type="EMBL" id="AF133701">
    <property type="protein sequence ID" value="AAF61384.1"/>
    <property type="molecule type" value="Genomic_DNA"/>
</dbReference>
<dbReference type="PIR" id="T09953">
    <property type="entry name" value="T09953"/>
</dbReference>
<dbReference type="SMR" id="Q36860"/>
<dbReference type="STRING" id="8030.ENSSSAP00000000008"/>
<dbReference type="PaxDb" id="8030-ENSSSAP00000000008"/>
<dbReference type="KEGG" id="sasa:808307"/>
<dbReference type="CTD" id="4514"/>
<dbReference type="Proteomes" id="UP000087266">
    <property type="component" value="Mitochondrion MT"/>
</dbReference>
<dbReference type="Bgee" id="ENSSSAG00000000024">
    <property type="expression patterns" value="Expressed in camera-type eye and 25 other cell types or tissues"/>
</dbReference>
<dbReference type="GO" id="GO:0005743">
    <property type="term" value="C:mitochondrial inner membrane"/>
    <property type="evidence" value="ECO:0007669"/>
    <property type="project" value="UniProtKB-SubCell"/>
</dbReference>
<dbReference type="GO" id="GO:0045277">
    <property type="term" value="C:respiratory chain complex IV"/>
    <property type="evidence" value="ECO:0000250"/>
    <property type="project" value="UniProtKB"/>
</dbReference>
<dbReference type="GO" id="GO:0004129">
    <property type="term" value="F:cytochrome-c oxidase activity"/>
    <property type="evidence" value="ECO:0007669"/>
    <property type="project" value="UniProtKB-EC"/>
</dbReference>
<dbReference type="GO" id="GO:0006123">
    <property type="term" value="P:mitochondrial electron transport, cytochrome c to oxygen"/>
    <property type="evidence" value="ECO:0007669"/>
    <property type="project" value="TreeGrafter"/>
</dbReference>
<dbReference type="CDD" id="cd01665">
    <property type="entry name" value="Cyt_c_Oxidase_III"/>
    <property type="match status" value="1"/>
</dbReference>
<dbReference type="FunFam" id="1.10.287.70:FF:000048">
    <property type="entry name" value="Cytochrome c oxidase subunit 3"/>
    <property type="match status" value="1"/>
</dbReference>
<dbReference type="FunFam" id="1.20.120.80:FF:000002">
    <property type="entry name" value="Cytochrome c oxidase subunit 3"/>
    <property type="match status" value="1"/>
</dbReference>
<dbReference type="Gene3D" id="1.10.287.70">
    <property type="match status" value="1"/>
</dbReference>
<dbReference type="Gene3D" id="1.20.120.80">
    <property type="entry name" value="Cytochrome c oxidase, subunit III, four-helix bundle"/>
    <property type="match status" value="1"/>
</dbReference>
<dbReference type="InterPro" id="IPR024791">
    <property type="entry name" value="Cyt_c/ubiquinol_Oxase_su3"/>
</dbReference>
<dbReference type="InterPro" id="IPR033945">
    <property type="entry name" value="Cyt_c_oxase_su3_dom"/>
</dbReference>
<dbReference type="InterPro" id="IPR000298">
    <property type="entry name" value="Cyt_c_oxidase-like_su3"/>
</dbReference>
<dbReference type="InterPro" id="IPR035973">
    <property type="entry name" value="Cyt_c_oxidase_su3-like_sf"/>
</dbReference>
<dbReference type="InterPro" id="IPR013833">
    <property type="entry name" value="Cyt_c_oxidase_su3_a-hlx"/>
</dbReference>
<dbReference type="PANTHER" id="PTHR11403:SF7">
    <property type="entry name" value="CYTOCHROME C OXIDASE SUBUNIT 3"/>
    <property type="match status" value="1"/>
</dbReference>
<dbReference type="PANTHER" id="PTHR11403">
    <property type="entry name" value="CYTOCHROME C OXIDASE SUBUNIT III"/>
    <property type="match status" value="1"/>
</dbReference>
<dbReference type="Pfam" id="PF00510">
    <property type="entry name" value="COX3"/>
    <property type="match status" value="1"/>
</dbReference>
<dbReference type="SUPFAM" id="SSF81452">
    <property type="entry name" value="Cytochrome c oxidase subunit III-like"/>
    <property type="match status" value="1"/>
</dbReference>
<dbReference type="PROSITE" id="PS50253">
    <property type="entry name" value="COX3"/>
    <property type="match status" value="1"/>
</dbReference>
<geneLocation type="mitochondrion"/>
<evidence type="ECO:0000250" key="1">
    <source>
        <dbReference type="UniProtKB" id="P00415"/>
    </source>
</evidence>
<evidence type="ECO:0000250" key="2">
    <source>
        <dbReference type="UniProtKB" id="P00420"/>
    </source>
</evidence>
<evidence type="ECO:0000305" key="3"/>
<keyword id="KW-0472">Membrane</keyword>
<keyword id="KW-0496">Mitochondrion</keyword>
<keyword id="KW-0999">Mitochondrion inner membrane</keyword>
<keyword id="KW-1185">Reference proteome</keyword>
<keyword id="KW-1278">Translocase</keyword>
<keyword id="KW-0812">Transmembrane</keyword>
<keyword id="KW-1133">Transmembrane helix</keyword>
<accession>Q36860</accession>
<accession>O03380</accession>
<comment type="function">
    <text evidence="2">Component of the cytochrome c oxidase, the last enzyme in the mitochondrial electron transport chain which drives oxidative phosphorylation. The respiratory chain contains 3 multisubunit complexes succinate dehydrogenase (complex II, CII), ubiquinol-cytochrome c oxidoreductase (cytochrome b-c1 complex, complex III, CIII) and cytochrome c oxidase (complex IV, CIV), that cooperate to transfer electrons derived from NADH and succinate to molecular oxygen, creating an electrochemical gradient over the inner membrane that drives transmembrane transport and the ATP synthase. Cytochrome c oxidase is the component of the respiratory chain that catalyzes the reduction of oxygen to water. Electrons originating from reduced cytochrome c in the intermembrane space (IMS) are transferred via the dinuclear copper A center (CU(A)) of subunit 2 and heme A of subunit 1 to the active site in subunit 1, a binuclear center (BNC) formed by heme A3 and copper B (CU(B)). The BNC reduces molecular oxygen to 2 water molecules using 4 electrons from cytochrome c in the IMS and 4 protons from the mitochondrial matrix.</text>
</comment>
<comment type="catalytic activity">
    <reaction evidence="2">
        <text>4 Fe(II)-[cytochrome c] + O2 + 8 H(+)(in) = 4 Fe(III)-[cytochrome c] + 2 H2O + 4 H(+)(out)</text>
        <dbReference type="Rhea" id="RHEA:11436"/>
        <dbReference type="Rhea" id="RHEA-COMP:10350"/>
        <dbReference type="Rhea" id="RHEA-COMP:14399"/>
        <dbReference type="ChEBI" id="CHEBI:15377"/>
        <dbReference type="ChEBI" id="CHEBI:15378"/>
        <dbReference type="ChEBI" id="CHEBI:15379"/>
        <dbReference type="ChEBI" id="CHEBI:29033"/>
        <dbReference type="ChEBI" id="CHEBI:29034"/>
        <dbReference type="EC" id="7.1.1.9"/>
    </reaction>
    <physiologicalReaction direction="left-to-right" evidence="2">
        <dbReference type="Rhea" id="RHEA:11437"/>
    </physiologicalReaction>
</comment>
<comment type="subunit">
    <text evidence="1">Component of the cytochrome c oxidase (complex IV, CIV), a multisubunit enzyme composed of 14 subunits. The complex is composed of a catalytic core of 3 subunits MT-CO1, MT-CO2 and MT-CO3, encoded in the mitochondrial DNA, and 11 supernumerary subunits COX4I, COX5A, COX5B, COX6A, COX6B, COX6C, COX7A, COX7B, COX7C, COX8 and NDUFA4, which are encoded in the nuclear genome. The complex exists as a monomer or a dimer and forms supercomplexes (SCs) in the inner mitochondrial membrane with NADH-ubiquinone oxidoreductase (complex I, CI) and ubiquinol-cytochrome c oxidoreductase (cytochrome b-c1 complex, complex III, CIII), resulting in different assemblies (supercomplex SCI(1)III(2)IV(1) and megacomplex MCI(2)III(2)IV(2)).</text>
</comment>
<comment type="subcellular location">
    <subcellularLocation>
        <location evidence="1">Mitochondrion inner membrane</location>
        <topology evidence="1">Multi-pass membrane protein</topology>
    </subcellularLocation>
</comment>
<comment type="similarity">
    <text evidence="3">Belongs to the cytochrome c oxidase subunit 3 family.</text>
</comment>
<proteinExistence type="inferred from homology"/>